<gene>
    <name evidence="1" type="primary">rpsP</name>
    <name type="ordered locus">Patl_1577</name>
</gene>
<comment type="similarity">
    <text evidence="1">Belongs to the bacterial ribosomal protein bS16 family.</text>
</comment>
<accession>Q15VI9</accession>
<organism>
    <name type="scientific">Pseudoalteromonas atlantica (strain T6c / ATCC BAA-1087)</name>
    <dbReference type="NCBI Taxonomy" id="3042615"/>
    <lineage>
        <taxon>Bacteria</taxon>
        <taxon>Pseudomonadati</taxon>
        <taxon>Pseudomonadota</taxon>
        <taxon>Gammaproteobacteria</taxon>
        <taxon>Alteromonadales</taxon>
        <taxon>Alteromonadaceae</taxon>
        <taxon>Paraglaciecola</taxon>
    </lineage>
</organism>
<feature type="chain" id="PRO_1000049318" description="Small ribosomal subunit protein bS16">
    <location>
        <begin position="1"/>
        <end position="83"/>
    </location>
</feature>
<evidence type="ECO:0000255" key="1">
    <source>
        <dbReference type="HAMAP-Rule" id="MF_00385"/>
    </source>
</evidence>
<evidence type="ECO:0000305" key="2"/>
<name>RS16_PSEA6</name>
<protein>
    <recommendedName>
        <fullName evidence="1">Small ribosomal subunit protein bS16</fullName>
    </recommendedName>
    <alternativeName>
        <fullName evidence="2">30S ribosomal protein S16</fullName>
    </alternativeName>
</protein>
<dbReference type="EMBL" id="CP000388">
    <property type="protein sequence ID" value="ABG40099.1"/>
    <property type="molecule type" value="Genomic_DNA"/>
</dbReference>
<dbReference type="RefSeq" id="WP_006994621.1">
    <property type="nucleotide sequence ID" value="NC_008228.1"/>
</dbReference>
<dbReference type="SMR" id="Q15VI9"/>
<dbReference type="STRING" id="342610.Patl_1577"/>
<dbReference type="KEGG" id="pat:Patl_1577"/>
<dbReference type="eggNOG" id="COG0228">
    <property type="taxonomic scope" value="Bacteria"/>
</dbReference>
<dbReference type="HOGENOM" id="CLU_100590_5_1_6"/>
<dbReference type="OrthoDB" id="9807878at2"/>
<dbReference type="Proteomes" id="UP000001981">
    <property type="component" value="Chromosome"/>
</dbReference>
<dbReference type="GO" id="GO:0005737">
    <property type="term" value="C:cytoplasm"/>
    <property type="evidence" value="ECO:0007669"/>
    <property type="project" value="UniProtKB-ARBA"/>
</dbReference>
<dbReference type="GO" id="GO:0015935">
    <property type="term" value="C:small ribosomal subunit"/>
    <property type="evidence" value="ECO:0007669"/>
    <property type="project" value="TreeGrafter"/>
</dbReference>
<dbReference type="GO" id="GO:0003735">
    <property type="term" value="F:structural constituent of ribosome"/>
    <property type="evidence" value="ECO:0007669"/>
    <property type="project" value="InterPro"/>
</dbReference>
<dbReference type="GO" id="GO:0006412">
    <property type="term" value="P:translation"/>
    <property type="evidence" value="ECO:0007669"/>
    <property type="project" value="UniProtKB-UniRule"/>
</dbReference>
<dbReference type="FunFam" id="3.30.1320.10:FF:000001">
    <property type="entry name" value="30S ribosomal protein S16"/>
    <property type="match status" value="1"/>
</dbReference>
<dbReference type="Gene3D" id="3.30.1320.10">
    <property type="match status" value="1"/>
</dbReference>
<dbReference type="HAMAP" id="MF_00385">
    <property type="entry name" value="Ribosomal_bS16"/>
    <property type="match status" value="1"/>
</dbReference>
<dbReference type="InterPro" id="IPR000307">
    <property type="entry name" value="Ribosomal_bS16"/>
</dbReference>
<dbReference type="InterPro" id="IPR023803">
    <property type="entry name" value="Ribosomal_bS16_dom_sf"/>
</dbReference>
<dbReference type="NCBIfam" id="TIGR00002">
    <property type="entry name" value="S16"/>
    <property type="match status" value="1"/>
</dbReference>
<dbReference type="PANTHER" id="PTHR12919">
    <property type="entry name" value="30S RIBOSOMAL PROTEIN S16"/>
    <property type="match status" value="1"/>
</dbReference>
<dbReference type="PANTHER" id="PTHR12919:SF20">
    <property type="entry name" value="SMALL RIBOSOMAL SUBUNIT PROTEIN BS16M"/>
    <property type="match status" value="1"/>
</dbReference>
<dbReference type="Pfam" id="PF00886">
    <property type="entry name" value="Ribosomal_S16"/>
    <property type="match status" value="1"/>
</dbReference>
<dbReference type="SUPFAM" id="SSF54565">
    <property type="entry name" value="Ribosomal protein S16"/>
    <property type="match status" value="1"/>
</dbReference>
<keyword id="KW-0687">Ribonucleoprotein</keyword>
<keyword id="KW-0689">Ribosomal protein</keyword>
<reference key="1">
    <citation type="submission" date="2006-06" db="EMBL/GenBank/DDBJ databases">
        <title>Complete sequence of Pseudoalteromonas atlantica T6c.</title>
        <authorList>
            <consortium name="US DOE Joint Genome Institute"/>
            <person name="Copeland A."/>
            <person name="Lucas S."/>
            <person name="Lapidus A."/>
            <person name="Barry K."/>
            <person name="Detter J.C."/>
            <person name="Glavina del Rio T."/>
            <person name="Hammon N."/>
            <person name="Israni S."/>
            <person name="Dalin E."/>
            <person name="Tice H."/>
            <person name="Pitluck S."/>
            <person name="Saunders E."/>
            <person name="Brettin T."/>
            <person name="Bruce D."/>
            <person name="Han C."/>
            <person name="Tapia R."/>
            <person name="Gilna P."/>
            <person name="Schmutz J."/>
            <person name="Larimer F."/>
            <person name="Land M."/>
            <person name="Hauser L."/>
            <person name="Kyrpides N."/>
            <person name="Kim E."/>
            <person name="Karls A.C."/>
            <person name="Bartlett D."/>
            <person name="Higgins B.P."/>
            <person name="Richardson P."/>
        </authorList>
    </citation>
    <scope>NUCLEOTIDE SEQUENCE [LARGE SCALE GENOMIC DNA]</scope>
    <source>
        <strain>T6c / ATCC BAA-1087</strain>
    </source>
</reference>
<proteinExistence type="inferred from homology"/>
<sequence length="83" mass="9367">MVTIRLQRGGAKKRPFYQVVVADSRRSRDGRFIENIGFFNPTAQGQEERLRLDLDRVEHWVGNGAGLSDRVARLVKDAQKAAA</sequence>